<accession>Q9ZJ14</accession>
<reference key="1">
    <citation type="submission" date="1997-04" db="EMBL/GenBank/DDBJ databases">
        <authorList>
            <person name="Kim H.K."/>
            <person name="Min K.H."/>
            <person name="Yamane G."/>
        </authorList>
    </citation>
    <scope>NUCLEOTIDE SEQUENCE [GENOMIC DNA]</scope>
</reference>
<feature type="chain" id="PRO_0000002105" description="Arginine biosynthesis bifunctional protein ArgJ alpha chain" evidence="2">
    <location>
        <begin position="1"/>
        <end position="192"/>
    </location>
</feature>
<feature type="chain" id="PRO_0000002106" description="Arginine biosynthesis bifunctional protein ArgJ beta chain" evidence="2">
    <location>
        <begin position="193"/>
        <end position="406"/>
    </location>
</feature>
<feature type="active site" description="Nucleophile" evidence="2">
    <location>
        <position position="193"/>
    </location>
</feature>
<feature type="binding site" evidence="2">
    <location>
        <position position="156"/>
    </location>
    <ligand>
        <name>substrate</name>
    </ligand>
</feature>
<feature type="binding site" evidence="2">
    <location>
        <position position="182"/>
    </location>
    <ligand>
        <name>substrate</name>
    </ligand>
</feature>
<feature type="binding site" evidence="2">
    <location>
        <position position="193"/>
    </location>
    <ligand>
        <name>substrate</name>
    </ligand>
</feature>
<feature type="binding site" evidence="2">
    <location>
        <position position="279"/>
    </location>
    <ligand>
        <name>substrate</name>
    </ligand>
</feature>
<feature type="binding site" evidence="2">
    <location>
        <position position="401"/>
    </location>
    <ligand>
        <name>substrate</name>
    </ligand>
</feature>
<feature type="binding site" evidence="2">
    <location>
        <position position="406"/>
    </location>
    <ligand>
        <name>substrate</name>
    </ligand>
</feature>
<feature type="site" description="Involved in the stabilization of negative charge on the oxyanion by the formation of the oxyanion hole" evidence="2">
    <location>
        <position position="121"/>
    </location>
</feature>
<feature type="site" description="Involved in the stabilization of negative charge on the oxyanion by the formation of the oxyanion hole" evidence="2">
    <location>
        <position position="122"/>
    </location>
</feature>
<feature type="site" description="Cleavage; by autolysis" evidence="2">
    <location>
        <begin position="192"/>
        <end position="193"/>
    </location>
</feature>
<comment type="function">
    <text evidence="2">Catalyzes two activities which are involved in the cyclic version of arginine biosynthesis: the synthesis of N-acetylglutamate from glutamate and acetyl-CoA as the acetyl donor, and of ornithine by transacetylation between N(2)-acetylornithine and glutamate.</text>
</comment>
<comment type="catalytic activity">
    <reaction evidence="2">
        <text>N(2)-acetyl-L-ornithine + L-glutamate = N-acetyl-L-glutamate + L-ornithine</text>
        <dbReference type="Rhea" id="RHEA:15349"/>
        <dbReference type="ChEBI" id="CHEBI:29985"/>
        <dbReference type="ChEBI" id="CHEBI:44337"/>
        <dbReference type="ChEBI" id="CHEBI:46911"/>
        <dbReference type="ChEBI" id="CHEBI:57805"/>
        <dbReference type="EC" id="2.3.1.35"/>
    </reaction>
</comment>
<comment type="catalytic activity">
    <reaction evidence="2">
        <text>L-glutamate + acetyl-CoA = N-acetyl-L-glutamate + CoA + H(+)</text>
        <dbReference type="Rhea" id="RHEA:24292"/>
        <dbReference type="ChEBI" id="CHEBI:15378"/>
        <dbReference type="ChEBI" id="CHEBI:29985"/>
        <dbReference type="ChEBI" id="CHEBI:44337"/>
        <dbReference type="ChEBI" id="CHEBI:57287"/>
        <dbReference type="ChEBI" id="CHEBI:57288"/>
        <dbReference type="EC" id="2.3.1.1"/>
    </reaction>
</comment>
<comment type="activity regulation">
    <text evidence="1">Feedback inhibition by L-arginine.</text>
</comment>
<comment type="pathway">
    <text evidence="2">Amino-acid biosynthesis; L-arginine biosynthesis; L-ornithine and N-acetyl-L-glutamate from L-glutamate and N(2)-acetyl-L-ornithine (cyclic): step 1/1.</text>
</comment>
<comment type="pathway">
    <text evidence="2">Amino-acid biosynthesis; L-arginine biosynthesis; N(2)-acetyl-L-ornithine from L-glutamate: step 1/4.</text>
</comment>
<comment type="subunit">
    <text evidence="2">Heterotetramer of two alpha and two beta chains.</text>
</comment>
<comment type="subcellular location">
    <subcellularLocation>
        <location evidence="2">Cytoplasm</location>
    </subcellularLocation>
</comment>
<comment type="similarity">
    <text evidence="2">Belongs to the ArgJ family.</text>
</comment>
<evidence type="ECO:0000250" key="1"/>
<evidence type="ECO:0000255" key="2">
    <source>
        <dbReference type="HAMAP-Rule" id="MF_01106"/>
    </source>
</evidence>
<proteinExistence type="inferred from homology"/>
<protein>
    <recommendedName>
        <fullName evidence="2">Arginine biosynthesis bifunctional protein ArgJ</fullName>
    </recommendedName>
    <domain>
        <recommendedName>
            <fullName evidence="2">Glutamate N-acetyltransferase</fullName>
            <ecNumber evidence="2">2.3.1.35</ecNumber>
        </recommendedName>
        <alternativeName>
            <fullName evidence="2">Ornithine acetyltransferase</fullName>
            <shortName evidence="2">OATase</shortName>
        </alternativeName>
        <alternativeName>
            <fullName evidence="2">Ornithine transacetylase</fullName>
        </alternativeName>
    </domain>
    <domain>
        <recommendedName>
            <fullName evidence="2">Amino-acid acetyltransferase</fullName>
            <ecNumber evidence="2">2.3.1.1</ecNumber>
        </recommendedName>
        <alternativeName>
            <fullName evidence="2">N-acetylglutamate synthase</fullName>
            <shortName evidence="2">AGSase</shortName>
        </alternativeName>
    </domain>
    <component>
        <recommendedName>
            <fullName evidence="2">Arginine biosynthesis bifunctional protein ArgJ alpha chain</fullName>
        </recommendedName>
    </component>
    <component>
        <recommendedName>
            <fullName evidence="2">Arginine biosynthesis bifunctional protein ArgJ beta chain</fullName>
        </recommendedName>
    </component>
</protein>
<dbReference type="EC" id="2.3.1.35" evidence="2"/>
<dbReference type="EC" id="2.3.1.1" evidence="2"/>
<dbReference type="EMBL" id="AF001627">
    <property type="protein sequence ID" value="AAD00896.1"/>
    <property type="molecule type" value="Genomic_DNA"/>
</dbReference>
<dbReference type="SMR" id="Q9ZJ14"/>
<dbReference type="STRING" id="692420.BAMF_1193"/>
<dbReference type="MEROPS" id="T05.002"/>
<dbReference type="UniPathway" id="UPA00068">
    <property type="reaction ID" value="UER00106"/>
</dbReference>
<dbReference type="UniPathway" id="UPA00068">
    <property type="reaction ID" value="UER00111"/>
</dbReference>
<dbReference type="GO" id="GO:0005737">
    <property type="term" value="C:cytoplasm"/>
    <property type="evidence" value="ECO:0007669"/>
    <property type="project" value="UniProtKB-SubCell"/>
</dbReference>
<dbReference type="GO" id="GO:0004358">
    <property type="term" value="F:glutamate N-acetyltransferase activity"/>
    <property type="evidence" value="ECO:0007669"/>
    <property type="project" value="UniProtKB-UniRule"/>
</dbReference>
<dbReference type="GO" id="GO:0004042">
    <property type="term" value="F:L-glutamate N-acetyltransferase activity"/>
    <property type="evidence" value="ECO:0007669"/>
    <property type="project" value="UniProtKB-UniRule"/>
</dbReference>
<dbReference type="GO" id="GO:0006526">
    <property type="term" value="P:L-arginine biosynthetic process"/>
    <property type="evidence" value="ECO:0007669"/>
    <property type="project" value="UniProtKB-UniRule"/>
</dbReference>
<dbReference type="GO" id="GO:0006592">
    <property type="term" value="P:ornithine biosynthetic process"/>
    <property type="evidence" value="ECO:0007669"/>
    <property type="project" value="TreeGrafter"/>
</dbReference>
<dbReference type="CDD" id="cd02152">
    <property type="entry name" value="OAT"/>
    <property type="match status" value="1"/>
</dbReference>
<dbReference type="FunFam" id="3.10.20.340:FF:000001">
    <property type="entry name" value="Arginine biosynthesis bifunctional protein ArgJ, chloroplastic"/>
    <property type="match status" value="1"/>
</dbReference>
<dbReference type="FunFam" id="3.60.70.12:FF:000001">
    <property type="entry name" value="Arginine biosynthesis bifunctional protein ArgJ, chloroplastic"/>
    <property type="match status" value="1"/>
</dbReference>
<dbReference type="FunFam" id="3.30.2330.10:FF:000001">
    <property type="entry name" value="Arginine biosynthesis bifunctional protein ArgJ, mitochondrial"/>
    <property type="match status" value="1"/>
</dbReference>
<dbReference type="Gene3D" id="3.30.2330.10">
    <property type="entry name" value="arginine biosynthesis bifunctional protein suprefamily"/>
    <property type="match status" value="1"/>
</dbReference>
<dbReference type="Gene3D" id="3.10.20.340">
    <property type="entry name" value="ArgJ beta chain, C-terminal domain"/>
    <property type="match status" value="1"/>
</dbReference>
<dbReference type="Gene3D" id="3.60.70.12">
    <property type="entry name" value="L-amino peptidase D-ALA esterase/amidase"/>
    <property type="match status" value="1"/>
</dbReference>
<dbReference type="HAMAP" id="MF_01106">
    <property type="entry name" value="ArgJ"/>
    <property type="match status" value="1"/>
</dbReference>
<dbReference type="InterPro" id="IPR002813">
    <property type="entry name" value="Arg_biosynth_ArgJ"/>
</dbReference>
<dbReference type="InterPro" id="IPR016117">
    <property type="entry name" value="ArgJ-like_dom_sf"/>
</dbReference>
<dbReference type="InterPro" id="IPR042195">
    <property type="entry name" value="ArgJ_beta_C"/>
</dbReference>
<dbReference type="NCBIfam" id="TIGR00120">
    <property type="entry name" value="ArgJ"/>
    <property type="match status" value="1"/>
</dbReference>
<dbReference type="NCBIfam" id="NF003802">
    <property type="entry name" value="PRK05388.1"/>
    <property type="match status" value="1"/>
</dbReference>
<dbReference type="PANTHER" id="PTHR23100">
    <property type="entry name" value="ARGININE BIOSYNTHESIS BIFUNCTIONAL PROTEIN ARGJ"/>
    <property type="match status" value="1"/>
</dbReference>
<dbReference type="PANTHER" id="PTHR23100:SF0">
    <property type="entry name" value="ARGININE BIOSYNTHESIS BIFUNCTIONAL PROTEIN ARGJ, MITOCHONDRIAL"/>
    <property type="match status" value="1"/>
</dbReference>
<dbReference type="Pfam" id="PF01960">
    <property type="entry name" value="ArgJ"/>
    <property type="match status" value="1"/>
</dbReference>
<dbReference type="SUPFAM" id="SSF56266">
    <property type="entry name" value="DmpA/ArgJ-like"/>
    <property type="match status" value="1"/>
</dbReference>
<keyword id="KW-0012">Acyltransferase</keyword>
<keyword id="KW-0028">Amino-acid biosynthesis</keyword>
<keyword id="KW-0055">Arginine biosynthesis</keyword>
<keyword id="KW-0068">Autocatalytic cleavage</keyword>
<keyword id="KW-0963">Cytoplasm</keyword>
<keyword id="KW-0511">Multifunctional enzyme</keyword>
<keyword id="KW-0808">Transferase</keyword>
<gene>
    <name evidence="2" type="primary">argJ</name>
</gene>
<name>ARGJ_BACAM</name>
<sequence length="406" mass="43277">MIQLSEDQIVKVTGDVSSPKGFQAKGVHCGLRYSKKDLGVIISETPAVSAAVYTQSHFQAAPIKVTQDSLKHGPTLKAVIVNSAIANACTGEQGLKDAYTMRESFASQLGIEPELVAVSSTGVIGEHLDMEKIHAGIELLKETPAGSGDFEEAILTTDTVIKQTCYELAIGGKTVTIGGAAKGSGMIHPNMATMLGFVTTDAAIEEKALQKALREITDVSFNQITVDGETSTNDMVLVMANGCAENECLTEDHPDWPVFKKALLLTCEDLAKEIARDGEGATKLIEAQVQGAKNNLDANVIAKKIVGSNLVKTAVYGTDANWGRIIGAIGHSAAQVTAEEVEVYLGGQCLFKNNEPQPFSESIAKEYLEGDEITIVIKMAEGDGNGRAWGCDLTYDYIKINASYRT</sequence>
<organism>
    <name type="scientific">Bacillus amyloliquefaciens</name>
    <name type="common">Bacillus velezensis</name>
    <dbReference type="NCBI Taxonomy" id="1390"/>
    <lineage>
        <taxon>Bacteria</taxon>
        <taxon>Bacillati</taxon>
        <taxon>Bacillota</taxon>
        <taxon>Bacilli</taxon>
        <taxon>Bacillales</taxon>
        <taxon>Bacillaceae</taxon>
        <taxon>Bacillus</taxon>
        <taxon>Bacillus amyloliquefaciens group</taxon>
    </lineage>
</organism>